<gene>
    <name evidence="1" type="primary">symE</name>
    <name type="ordered locus">EcolC_3720</name>
</gene>
<comment type="function">
    <text evidence="1">Involved in the degradation and recycling of damaged RNA. It is itself a target for degradation by the ATP-dependent protease Lon.</text>
</comment>
<comment type="subcellular location">
    <subcellularLocation>
        <location evidence="1">Cytoplasm</location>
    </subcellularLocation>
</comment>
<comment type="similarity">
    <text evidence="1">Belongs to the SymE family.</text>
</comment>
<proteinExistence type="inferred from homology"/>
<accession>B1IS82</accession>
<evidence type="ECO:0000255" key="1">
    <source>
        <dbReference type="HAMAP-Rule" id="MF_01193"/>
    </source>
</evidence>
<evidence type="ECO:0000255" key="2">
    <source>
        <dbReference type="PROSITE-ProRule" id="PRU01076"/>
    </source>
</evidence>
<organism>
    <name type="scientific">Escherichia coli (strain ATCC 8739 / DSM 1576 / NBRC 3972 / NCIMB 8545 / WDCM 00012 / Crooks)</name>
    <dbReference type="NCBI Taxonomy" id="481805"/>
    <lineage>
        <taxon>Bacteria</taxon>
        <taxon>Pseudomonadati</taxon>
        <taxon>Pseudomonadota</taxon>
        <taxon>Gammaproteobacteria</taxon>
        <taxon>Enterobacterales</taxon>
        <taxon>Enterobacteriaceae</taxon>
        <taxon>Escherichia</taxon>
    </lineage>
</organism>
<keyword id="KW-0963">Cytoplasm</keyword>
<keyword id="KW-0238">DNA-binding</keyword>
<keyword id="KW-0255">Endonuclease</keyword>
<keyword id="KW-0378">Hydrolase</keyword>
<keyword id="KW-0540">Nuclease</keyword>
<keyword id="KW-0694">RNA-binding</keyword>
<protein>
    <recommendedName>
        <fullName evidence="1">Endoribonuclease SymE</fullName>
        <ecNumber evidence="1">3.1.-.-</ecNumber>
    </recommendedName>
</protein>
<name>SYME_ECOLC</name>
<reference key="1">
    <citation type="submission" date="2008-02" db="EMBL/GenBank/DDBJ databases">
        <title>Complete sequence of Escherichia coli C str. ATCC 8739.</title>
        <authorList>
            <person name="Copeland A."/>
            <person name="Lucas S."/>
            <person name="Lapidus A."/>
            <person name="Glavina del Rio T."/>
            <person name="Dalin E."/>
            <person name="Tice H."/>
            <person name="Bruce D."/>
            <person name="Goodwin L."/>
            <person name="Pitluck S."/>
            <person name="Kiss H."/>
            <person name="Brettin T."/>
            <person name="Detter J.C."/>
            <person name="Han C."/>
            <person name="Kuske C.R."/>
            <person name="Schmutz J."/>
            <person name="Larimer F."/>
            <person name="Land M."/>
            <person name="Hauser L."/>
            <person name="Kyrpides N."/>
            <person name="Mikhailova N."/>
            <person name="Ingram L."/>
            <person name="Richardson P."/>
        </authorList>
    </citation>
    <scope>NUCLEOTIDE SEQUENCE [LARGE SCALE GENOMIC DNA]</scope>
    <source>
        <strain>ATCC 8739 / DSM 1576 / NBRC 3972 / NCIMB 8545 / WDCM 00012 / Crooks</strain>
    </source>
</reference>
<dbReference type="EC" id="3.1.-.-" evidence="1"/>
<dbReference type="EMBL" id="CP000946">
    <property type="protein sequence ID" value="ACA79330.1"/>
    <property type="molecule type" value="Genomic_DNA"/>
</dbReference>
<dbReference type="RefSeq" id="WP_000132625.1">
    <property type="nucleotide sequence ID" value="NC_010468.1"/>
</dbReference>
<dbReference type="SMR" id="B1IS82"/>
<dbReference type="KEGG" id="ecl:EcolC_3720"/>
<dbReference type="HOGENOM" id="CLU_151239_0_0_6"/>
<dbReference type="GO" id="GO:0005737">
    <property type="term" value="C:cytoplasm"/>
    <property type="evidence" value="ECO:0007669"/>
    <property type="project" value="UniProtKB-SubCell"/>
</dbReference>
<dbReference type="GO" id="GO:0003677">
    <property type="term" value="F:DNA binding"/>
    <property type="evidence" value="ECO:0007669"/>
    <property type="project" value="UniProtKB-KW"/>
</dbReference>
<dbReference type="GO" id="GO:0003723">
    <property type="term" value="F:RNA binding"/>
    <property type="evidence" value="ECO:0007669"/>
    <property type="project" value="UniProtKB-KW"/>
</dbReference>
<dbReference type="GO" id="GO:0004521">
    <property type="term" value="F:RNA endonuclease activity"/>
    <property type="evidence" value="ECO:0007669"/>
    <property type="project" value="UniProtKB-UniRule"/>
</dbReference>
<dbReference type="GO" id="GO:0016070">
    <property type="term" value="P:RNA metabolic process"/>
    <property type="evidence" value="ECO:0007669"/>
    <property type="project" value="InterPro"/>
</dbReference>
<dbReference type="HAMAP" id="MF_01193">
    <property type="entry name" value="Endoribonucl_SymE"/>
    <property type="match status" value="1"/>
</dbReference>
<dbReference type="InterPro" id="IPR007159">
    <property type="entry name" value="SpoVT-AbrB_dom"/>
</dbReference>
<dbReference type="InterPro" id="IPR014944">
    <property type="entry name" value="Toxin_SymE-like"/>
</dbReference>
<dbReference type="InterPro" id="IPR020883">
    <property type="entry name" value="TypeI_TA_SymE"/>
</dbReference>
<dbReference type="NCBIfam" id="NF010128">
    <property type="entry name" value="PRK13605.1"/>
    <property type="match status" value="1"/>
</dbReference>
<dbReference type="Pfam" id="PF08845">
    <property type="entry name" value="SymE_toxin"/>
    <property type="match status" value="1"/>
</dbReference>
<dbReference type="PROSITE" id="PS51740">
    <property type="entry name" value="SPOVT_ABRB"/>
    <property type="match status" value="1"/>
</dbReference>
<sequence>MTDTHSIAQPFEAEVSPANNRQLTVSYASRYPDYSRIPAITLKGQWLEAAGFATGTAVVVKVMEGCIVLTAQPAAAEESELMQSLRQVCKLSARKQKQVQDFIGVITGKQKVA</sequence>
<feature type="chain" id="PRO_1000085480" description="Endoribonuclease SymE">
    <location>
        <begin position="1"/>
        <end position="113"/>
    </location>
</feature>
<feature type="domain" description="SpoVT-AbrB" evidence="2">
    <location>
        <begin position="29"/>
        <end position="74"/>
    </location>
</feature>